<gene>
    <name type="primary">CFT1</name>
    <name type="ordered locus">CAGL0H01463g</name>
</gene>
<accession>Q6FSD2</accession>
<evidence type="ECO:0000250" key="1"/>
<evidence type="ECO:0000256" key="2">
    <source>
        <dbReference type="SAM" id="MobiDB-lite"/>
    </source>
</evidence>
<evidence type="ECO:0000305" key="3"/>
<organism>
    <name type="scientific">Candida glabrata (strain ATCC 2001 / BCRC 20586 / JCM 3761 / NBRC 0622 / NRRL Y-65 / CBS 138)</name>
    <name type="common">Yeast</name>
    <name type="synonym">Nakaseomyces glabratus</name>
    <dbReference type="NCBI Taxonomy" id="284593"/>
    <lineage>
        <taxon>Eukaryota</taxon>
        <taxon>Fungi</taxon>
        <taxon>Dikarya</taxon>
        <taxon>Ascomycota</taxon>
        <taxon>Saccharomycotina</taxon>
        <taxon>Saccharomycetes</taxon>
        <taxon>Saccharomycetales</taxon>
        <taxon>Saccharomycetaceae</taxon>
        <taxon>Nakaseomyces</taxon>
    </lineage>
</organism>
<sequence length="1361" mass="154576">MNVYDDVIDPTVVSHSVCGHFTTTDYLELIVIRTDVLSIYKPIRSGRLYLMEEHKLSGRINDVALIPKHSNGSNGNGINLSYLLLSTGVAKLSLLMYNNMTSSIETISLHFYEDKFESATMLDLARNSQLRIEPNGNYAMLFNNDVLAILPFYTGINEDEDEDYINNDKSKINDNSKKSLFKRKKGKTQNNKVTHPSIIINCSELGPQIKNIKDIQFLCGFTKSTIGVLYQPQLAWCGNSQLVPLPTNYAIISLDMKFSIDATTFDKAIISEISQLPSDWHTIAPTLSGSLILGVNEIAFLDNTGVLQSILTLNSYSDKVLPKVRVIDKSSHEVFFNTGSKFALIPSNENERSVENILLFDENGCIFNVDLKSEGRLLTQFNITKLPLGEDVLSQKSNPSSVSIIWADGRLDTYTIFIGFQSGDATMLKLNHLHSAIEVEEPTFMKDYVNKQASAAYNNEDDDDDDDDFNLYSDEENDQVNNKNDRTFGTNESNEPFTAQELMELRNIGPINSMCVGKVSSIEDNVKGLPNPNKQEISIVCTSGYGDGSHLNAILASVQPRVEKALKFISITKIWNLHIKGKDKFLITTDSTQSQSNIYEIDNNFSQHKQGRLRRDATTIHIATIGDNKRIVQVTTNHLYLYDLTFRRFSTIKFDYEVVHVSVMDPYVLITLSRGDIKVFELENRNKKKFVKVPLPEILTEMVITSGLILKSNMCNEFLSGIGKSTIEQLLFTFVTADNQIIFFTKDHNDRIFQLNGIDQLQDSLYISTYQLPDEIIPDPSIKQIMINKLGNNSKDEYLTILTFGGEIYQYKKSRSRHSRFYRNVGRNDHPITGAPDNAYPKGVSGIERIMHYIPNFDGYSVIFVTGNTPYIIMKEDDSLPRIFPFGNIPIVSMSRWGEGSVICIDDIKNARIYSLNQDNIYYGNKLPIRKIKIGSMLQNYKTLNSIVYHERTQLYLVSYTKEISYEAKAEDGSLLIGYKPELPNAKAFKSGVLLINPKSWEVIDELDLPDNSLVNDMKSSFIQIDTRTKRKREYIIVGIGYATMEDVPPTGEFHIYDITEVVPEPGKPNTNFKLKEIFKEDIRGIVSVVNGISGRFLISQSQKIMVRDVQQDNSVIPVAFLDVPVFVTSLKTFGNLIVIGDAMQGIQFVGFDAEPYRMITLGSSITKFEVISVEFLVNNGDIYFLVTDRDSIMHVLKYAPDQPNTLSGQRLVHCSSFNLHSLNNCTMLLPKNDEFPRDQRYSRSFQTITAQVDGSISKIVPVKEETYRRLYFIQQQIIDKEPQLAGLNPRMERQDNKYYHLGHSLRPMLDFNIIKRFKDMSMNRRSHIVQKLGKNSNLEVWRDLIDLEFSLRSLKPTDQN</sequence>
<feature type="chain" id="PRO_0000290626" description="Protein CFT1">
    <location>
        <begin position="1"/>
        <end position="1361"/>
    </location>
</feature>
<feature type="region of interest" description="Disordered" evidence="2">
    <location>
        <begin position="455"/>
        <end position="493"/>
    </location>
</feature>
<feature type="compositionally biased region" description="Acidic residues" evidence="2">
    <location>
        <begin position="459"/>
        <end position="478"/>
    </location>
</feature>
<feature type="compositionally biased region" description="Polar residues" evidence="2">
    <location>
        <begin position="479"/>
        <end position="493"/>
    </location>
</feature>
<name>CFT1_CANGA</name>
<proteinExistence type="inferred from homology"/>
<protein>
    <recommendedName>
        <fullName>Protein CFT1</fullName>
    </recommendedName>
    <alternativeName>
        <fullName>Cleavage factor two protein 1</fullName>
    </alternativeName>
</protein>
<dbReference type="EMBL" id="CR380954">
    <property type="protein sequence ID" value="CAG59795.1"/>
    <property type="molecule type" value="Genomic_DNA"/>
</dbReference>
<dbReference type="RefSeq" id="XP_446862.1">
    <property type="nucleotide sequence ID" value="XM_446862.1"/>
</dbReference>
<dbReference type="SMR" id="Q6FSD2"/>
<dbReference type="FunCoup" id="Q6FSD2">
    <property type="interactions" value="1221"/>
</dbReference>
<dbReference type="STRING" id="284593.Q6FSD2"/>
<dbReference type="EnsemblFungi" id="CAGL0H01463g-T">
    <property type="protein sequence ID" value="CAGL0H01463g-T-p1"/>
    <property type="gene ID" value="CAGL0H01463g"/>
</dbReference>
<dbReference type="KEGG" id="cgr:2888551"/>
<dbReference type="CGD" id="CAL0130563">
    <property type="gene designation" value="CAGL0H01463g"/>
</dbReference>
<dbReference type="VEuPathDB" id="FungiDB:CAGL0H01463g"/>
<dbReference type="eggNOG" id="KOG1896">
    <property type="taxonomic scope" value="Eukaryota"/>
</dbReference>
<dbReference type="HOGENOM" id="CLU_002414_0_0_1"/>
<dbReference type="InParanoid" id="Q6FSD2"/>
<dbReference type="OMA" id="PMTKFKL"/>
<dbReference type="Proteomes" id="UP000002428">
    <property type="component" value="Chromosome H"/>
</dbReference>
<dbReference type="GO" id="GO:0005847">
    <property type="term" value="C:mRNA cleavage and polyadenylation specificity factor complex"/>
    <property type="evidence" value="ECO:0007669"/>
    <property type="project" value="EnsemblFungi"/>
</dbReference>
<dbReference type="GO" id="GO:0003723">
    <property type="term" value="F:RNA binding"/>
    <property type="evidence" value="ECO:0007669"/>
    <property type="project" value="UniProtKB-KW"/>
</dbReference>
<dbReference type="GO" id="GO:0006397">
    <property type="term" value="P:mRNA processing"/>
    <property type="evidence" value="ECO:0007669"/>
    <property type="project" value="UniProtKB-KW"/>
</dbReference>
<dbReference type="GO" id="GO:0006369">
    <property type="term" value="P:termination of RNA polymerase II transcription"/>
    <property type="evidence" value="ECO:0007669"/>
    <property type="project" value="EnsemblFungi"/>
</dbReference>
<dbReference type="FunFam" id="2.130.10.10:FF:000937">
    <property type="entry name" value="Cft1p"/>
    <property type="match status" value="1"/>
</dbReference>
<dbReference type="Gene3D" id="2.130.10.10">
    <property type="entry name" value="YVTN repeat-like/Quinoprotein amine dehydrogenase"/>
    <property type="match status" value="3"/>
</dbReference>
<dbReference type="InterPro" id="IPR018846">
    <property type="entry name" value="Beta-prop_RSE1/DDB1/CPSF1_1st"/>
</dbReference>
<dbReference type="InterPro" id="IPR004871">
    <property type="entry name" value="Cleavage/polyA-sp_fac_asu_C"/>
</dbReference>
<dbReference type="InterPro" id="IPR050358">
    <property type="entry name" value="RSE1/DDB1/CFT1/CPSF1"/>
</dbReference>
<dbReference type="InterPro" id="IPR015943">
    <property type="entry name" value="WD40/YVTN_repeat-like_dom_sf"/>
</dbReference>
<dbReference type="PANTHER" id="PTHR10644">
    <property type="entry name" value="DNA REPAIR/RNA PROCESSING CPSF FAMILY"/>
    <property type="match status" value="1"/>
</dbReference>
<dbReference type="Pfam" id="PF10433">
    <property type="entry name" value="Beta-prop_RSE1_1st"/>
    <property type="match status" value="1"/>
</dbReference>
<dbReference type="Pfam" id="PF23726">
    <property type="entry name" value="Beta-prop_RSE1_2nd"/>
    <property type="match status" value="1"/>
</dbReference>
<dbReference type="Pfam" id="PF03178">
    <property type="entry name" value="CPSF_A"/>
    <property type="match status" value="1"/>
</dbReference>
<reference key="1">
    <citation type="journal article" date="2004" name="Nature">
        <title>Genome evolution in yeasts.</title>
        <authorList>
            <person name="Dujon B."/>
            <person name="Sherman D."/>
            <person name="Fischer G."/>
            <person name="Durrens P."/>
            <person name="Casaregola S."/>
            <person name="Lafontaine I."/>
            <person name="de Montigny J."/>
            <person name="Marck C."/>
            <person name="Neuveglise C."/>
            <person name="Talla E."/>
            <person name="Goffard N."/>
            <person name="Frangeul L."/>
            <person name="Aigle M."/>
            <person name="Anthouard V."/>
            <person name="Babour A."/>
            <person name="Barbe V."/>
            <person name="Barnay S."/>
            <person name="Blanchin S."/>
            <person name="Beckerich J.-M."/>
            <person name="Beyne E."/>
            <person name="Bleykasten C."/>
            <person name="Boisrame A."/>
            <person name="Boyer J."/>
            <person name="Cattolico L."/>
            <person name="Confanioleri F."/>
            <person name="de Daruvar A."/>
            <person name="Despons L."/>
            <person name="Fabre E."/>
            <person name="Fairhead C."/>
            <person name="Ferry-Dumazet H."/>
            <person name="Groppi A."/>
            <person name="Hantraye F."/>
            <person name="Hennequin C."/>
            <person name="Jauniaux N."/>
            <person name="Joyet P."/>
            <person name="Kachouri R."/>
            <person name="Kerrest A."/>
            <person name="Koszul R."/>
            <person name="Lemaire M."/>
            <person name="Lesur I."/>
            <person name="Ma L."/>
            <person name="Muller H."/>
            <person name="Nicaud J.-M."/>
            <person name="Nikolski M."/>
            <person name="Oztas S."/>
            <person name="Ozier-Kalogeropoulos O."/>
            <person name="Pellenz S."/>
            <person name="Potier S."/>
            <person name="Richard G.-F."/>
            <person name="Straub M.-L."/>
            <person name="Suleau A."/>
            <person name="Swennen D."/>
            <person name="Tekaia F."/>
            <person name="Wesolowski-Louvel M."/>
            <person name="Westhof E."/>
            <person name="Wirth B."/>
            <person name="Zeniou-Meyer M."/>
            <person name="Zivanovic Y."/>
            <person name="Bolotin-Fukuhara M."/>
            <person name="Thierry A."/>
            <person name="Bouchier C."/>
            <person name="Caudron B."/>
            <person name="Scarpelli C."/>
            <person name="Gaillardin C."/>
            <person name="Weissenbach J."/>
            <person name="Wincker P."/>
            <person name="Souciet J.-L."/>
        </authorList>
    </citation>
    <scope>NUCLEOTIDE SEQUENCE [LARGE SCALE GENOMIC DNA]</scope>
    <source>
        <strain>ATCC 2001 / BCRC 20586 / JCM 3761 / NBRC 0622 / NRRL Y-65 / CBS 138</strain>
    </source>
</reference>
<keyword id="KW-0507">mRNA processing</keyword>
<keyword id="KW-0539">Nucleus</keyword>
<keyword id="KW-1185">Reference proteome</keyword>
<keyword id="KW-0694">RNA-binding</keyword>
<comment type="function">
    <text evidence="1">RNA-binding component of the cleavage and polyadenylation factor (CPF) complex, which plays a key role in polyadenylation-dependent pre-mRNA 3'-end formation and cooperates with cleavage factors including the CFIA complex and NAB4/CFIB. Involved in poly(A) site recognition. May be involved in coupling transcription termination and mRNA 3'-end formation (By similarity).</text>
</comment>
<comment type="subcellular location">
    <subcellularLocation>
        <location evidence="1">Nucleus</location>
    </subcellularLocation>
</comment>
<comment type="similarity">
    <text evidence="3">Belongs to the CFT1 family.</text>
</comment>